<name>PSD_PSYIN</name>
<sequence>MIDQLKIIGQYLLPKKLLSRLLGKLAAAEAGKLTTFLIKKFINKFNVDMSEAKYSDPEYFKTFNDFFTRELKPEARQIIAGEDNLAHPVDGAVSQMGDIKEGRLFQAKGHDFSLRELLGGRDDVAAPFDKGLFSTIYLAPKDYHRIHMPITGKLEQMIFIPGDLFSVNPLTAQNVPNLFARNERAVAIFSTAVGPVAMVLVGATIVASIETVWAGTLTANADKEIQYWDYKNQDITLEKGAEMGRFKLGSTVVALFPKESIHFAENLQAGSVTRLGELFASKVEHK</sequence>
<proteinExistence type="inferred from homology"/>
<comment type="function">
    <text evidence="1">Catalyzes the formation of phosphatidylethanolamine (PtdEtn) from phosphatidylserine (PtdSer).</text>
</comment>
<comment type="catalytic activity">
    <reaction evidence="1">
        <text>a 1,2-diacyl-sn-glycero-3-phospho-L-serine + H(+) = a 1,2-diacyl-sn-glycero-3-phosphoethanolamine + CO2</text>
        <dbReference type="Rhea" id="RHEA:20828"/>
        <dbReference type="ChEBI" id="CHEBI:15378"/>
        <dbReference type="ChEBI" id="CHEBI:16526"/>
        <dbReference type="ChEBI" id="CHEBI:57262"/>
        <dbReference type="ChEBI" id="CHEBI:64612"/>
        <dbReference type="EC" id="4.1.1.65"/>
    </reaction>
</comment>
<comment type="cofactor">
    <cofactor evidence="1">
        <name>pyruvate</name>
        <dbReference type="ChEBI" id="CHEBI:15361"/>
    </cofactor>
    <text evidence="1">Binds 1 pyruvoyl group covalently per subunit.</text>
</comment>
<comment type="pathway">
    <text evidence="1">Phospholipid metabolism; phosphatidylethanolamine biosynthesis; phosphatidylethanolamine from CDP-diacylglycerol: step 2/2.</text>
</comment>
<comment type="subunit">
    <text evidence="1">Heterodimer of a large membrane-associated beta subunit and a small pyruvoyl-containing alpha subunit.</text>
</comment>
<comment type="subcellular location">
    <subcellularLocation>
        <location evidence="1">Cell membrane</location>
        <topology evidence="1">Peripheral membrane protein</topology>
    </subcellularLocation>
</comment>
<comment type="PTM">
    <text evidence="1">Is synthesized initially as an inactive proenzyme. Formation of the active enzyme involves a self-maturation process in which the active site pyruvoyl group is generated from an internal serine residue via an autocatalytic post-translational modification. Two non-identical subunits are generated from the proenzyme in this reaction, and the pyruvate is formed at the N-terminus of the alpha chain, which is derived from the carboxyl end of the proenzyme. The autoendoproteolytic cleavage occurs by a canonical serine protease mechanism, in which the side chain hydroxyl group of the serine supplies its oxygen atom to form the C-terminus of the beta chain, while the remainder of the serine residue undergoes an oxidative deamination to produce ammonia and the pyruvoyl prosthetic group on the alpha chain. During this reaction, the Ser that is part of the protease active site of the proenzyme becomes the pyruvoyl prosthetic group, which constitutes an essential element of the active site of the mature decarboxylase.</text>
</comment>
<comment type="similarity">
    <text evidence="1">Belongs to the phosphatidylserine decarboxylase family. PSD-B subfamily. Prokaryotic type I sub-subfamily.</text>
</comment>
<evidence type="ECO:0000255" key="1">
    <source>
        <dbReference type="HAMAP-Rule" id="MF_00662"/>
    </source>
</evidence>
<protein>
    <recommendedName>
        <fullName evidence="1">Phosphatidylserine decarboxylase proenzyme</fullName>
        <ecNumber evidence="1">4.1.1.65</ecNumber>
    </recommendedName>
    <component>
        <recommendedName>
            <fullName evidence="1">Phosphatidylserine decarboxylase alpha chain</fullName>
        </recommendedName>
    </component>
    <component>
        <recommendedName>
            <fullName evidence="1">Phosphatidylserine decarboxylase beta chain</fullName>
        </recommendedName>
    </component>
</protein>
<organism>
    <name type="scientific">Psychromonas ingrahamii (strain DSM 17664 / CCUG 51855 / 37)</name>
    <dbReference type="NCBI Taxonomy" id="357804"/>
    <lineage>
        <taxon>Bacteria</taxon>
        <taxon>Pseudomonadati</taxon>
        <taxon>Pseudomonadota</taxon>
        <taxon>Gammaproteobacteria</taxon>
        <taxon>Alteromonadales</taxon>
        <taxon>Psychromonadaceae</taxon>
        <taxon>Psychromonas</taxon>
    </lineage>
</organism>
<feature type="chain" id="PRO_1000026576" description="Phosphatidylserine decarboxylase beta chain" evidence="1">
    <location>
        <begin position="1"/>
        <end position="249"/>
    </location>
</feature>
<feature type="chain" id="PRO_1000026577" description="Phosphatidylserine decarboxylase alpha chain" evidence="1">
    <location>
        <begin position="250"/>
        <end position="286"/>
    </location>
</feature>
<feature type="active site" description="Charge relay system; for autoendoproteolytic cleavage activity" evidence="1">
    <location>
        <position position="90"/>
    </location>
</feature>
<feature type="active site" description="Charge relay system; for autoendoproteolytic cleavage activity" evidence="1">
    <location>
        <position position="147"/>
    </location>
</feature>
<feature type="active site" description="Charge relay system; for autoendoproteolytic cleavage activity" evidence="1">
    <location>
        <position position="250"/>
    </location>
</feature>
<feature type="active site" description="Schiff-base intermediate with substrate; via pyruvic acid; for decarboxylase activity" evidence="1">
    <location>
        <position position="250"/>
    </location>
</feature>
<feature type="site" description="Cleavage (non-hydrolytic); by autocatalysis" evidence="1">
    <location>
        <begin position="249"/>
        <end position="250"/>
    </location>
</feature>
<feature type="modified residue" description="Pyruvic acid (Ser); by autocatalysis" evidence="1">
    <location>
        <position position="250"/>
    </location>
</feature>
<keyword id="KW-1003">Cell membrane</keyword>
<keyword id="KW-0210">Decarboxylase</keyword>
<keyword id="KW-0444">Lipid biosynthesis</keyword>
<keyword id="KW-0443">Lipid metabolism</keyword>
<keyword id="KW-0456">Lyase</keyword>
<keyword id="KW-0472">Membrane</keyword>
<keyword id="KW-0594">Phospholipid biosynthesis</keyword>
<keyword id="KW-1208">Phospholipid metabolism</keyword>
<keyword id="KW-0670">Pyruvate</keyword>
<keyword id="KW-1185">Reference proteome</keyword>
<keyword id="KW-0865">Zymogen</keyword>
<reference key="1">
    <citation type="journal article" date="2008" name="BMC Genomics">
        <title>Genomics of an extreme psychrophile, Psychromonas ingrahamii.</title>
        <authorList>
            <person name="Riley M."/>
            <person name="Staley J.T."/>
            <person name="Danchin A."/>
            <person name="Wang T.Z."/>
            <person name="Brettin T.S."/>
            <person name="Hauser L.J."/>
            <person name="Land M.L."/>
            <person name="Thompson L.S."/>
        </authorList>
    </citation>
    <scope>NUCLEOTIDE SEQUENCE [LARGE SCALE GENOMIC DNA]</scope>
    <source>
        <strain>DSM 17664 / CCUG 51855 / 37</strain>
    </source>
</reference>
<gene>
    <name evidence="1" type="primary">psd</name>
    <name type="ordered locus">Ping_3337</name>
</gene>
<accession>A1SZV9</accession>
<dbReference type="EC" id="4.1.1.65" evidence="1"/>
<dbReference type="EMBL" id="CP000510">
    <property type="protein sequence ID" value="ABM05024.1"/>
    <property type="molecule type" value="Genomic_DNA"/>
</dbReference>
<dbReference type="RefSeq" id="WP_011771576.1">
    <property type="nucleotide sequence ID" value="NC_008709.1"/>
</dbReference>
<dbReference type="SMR" id="A1SZV9"/>
<dbReference type="STRING" id="357804.Ping_3337"/>
<dbReference type="KEGG" id="pin:Ping_3337"/>
<dbReference type="eggNOG" id="COG0688">
    <property type="taxonomic scope" value="Bacteria"/>
</dbReference>
<dbReference type="HOGENOM" id="CLU_029061_4_1_6"/>
<dbReference type="OrthoDB" id="9802030at2"/>
<dbReference type="UniPathway" id="UPA00558">
    <property type="reaction ID" value="UER00616"/>
</dbReference>
<dbReference type="Proteomes" id="UP000000639">
    <property type="component" value="Chromosome"/>
</dbReference>
<dbReference type="GO" id="GO:0005886">
    <property type="term" value="C:plasma membrane"/>
    <property type="evidence" value="ECO:0007669"/>
    <property type="project" value="UniProtKB-SubCell"/>
</dbReference>
<dbReference type="GO" id="GO:0004609">
    <property type="term" value="F:phosphatidylserine decarboxylase activity"/>
    <property type="evidence" value="ECO:0007669"/>
    <property type="project" value="UniProtKB-UniRule"/>
</dbReference>
<dbReference type="GO" id="GO:0006646">
    <property type="term" value="P:phosphatidylethanolamine biosynthetic process"/>
    <property type="evidence" value="ECO:0007669"/>
    <property type="project" value="UniProtKB-UniRule"/>
</dbReference>
<dbReference type="HAMAP" id="MF_00662">
    <property type="entry name" value="PS_decarb_PSD_B_type1"/>
    <property type="match status" value="1"/>
</dbReference>
<dbReference type="InterPro" id="IPR003817">
    <property type="entry name" value="PS_Dcarbxylase"/>
</dbReference>
<dbReference type="InterPro" id="IPR033177">
    <property type="entry name" value="PSD-B"/>
</dbReference>
<dbReference type="InterPro" id="IPR033178">
    <property type="entry name" value="PSD_type1_pro"/>
</dbReference>
<dbReference type="NCBIfam" id="TIGR00163">
    <property type="entry name" value="PS_decarb"/>
    <property type="match status" value="1"/>
</dbReference>
<dbReference type="PANTHER" id="PTHR10067">
    <property type="entry name" value="PHOSPHATIDYLSERINE DECARBOXYLASE"/>
    <property type="match status" value="1"/>
</dbReference>
<dbReference type="PANTHER" id="PTHR10067:SF6">
    <property type="entry name" value="PHOSPHATIDYLSERINE DECARBOXYLASE PROENZYME, MITOCHONDRIAL"/>
    <property type="match status" value="1"/>
</dbReference>
<dbReference type="Pfam" id="PF02666">
    <property type="entry name" value="PS_Dcarbxylase"/>
    <property type="match status" value="1"/>
</dbReference>